<sequence>MKTKIIIYICIWATAWAIPVPQLVPLERDIVEKSADVPFLAHPGTAAQNELHINNATNDDSPKGSELGRQVHSNGGYERDRNGSESIAVGGKSSPTQPILANAQGNSAKEREDVETYGHDGIHAGGENSTANGIRGQVGIAENAEEAKESKVHGQPHQDTKTGLASDTSQNGDATLVQENEPQVAGSKNSTNHEVGTHGSGVAAQETTPQREGEGSENQGAEVTPSIGEGAGLDNTEGSPSGNGIEEDEDTGSGDGVGADAGDGRESHDGTEGHEGQSSGGNNDNRGQGSVSTEDDDSKEQEGSPNGRGGDNTSSSEETGIEEGDGTQTTQDNQNLSPTEGGIISQAEACPSGQSQNQGLETEGSSTGNKSSITKESGKLSGSKDSNGHHGMELDKRNSPKQGESDKPQGAAEKSDTHNNMGHSRIGSSSNSDGHDSYDFDDESMQGDDPNSSDESNGSDGSDDANSESAIENGNHGDASYTSDESSDNGSDSDSHAGEDDSSDDTSDTDDSDSNGDDDSESKDKDESDNSNHDNDSDSESKSDSSDSDSDSSDSSDSSDSSDSSETSDSSDSSDTSDSSDSSDSSDSSNSSDTSDSSDSSDGDSSDGDSSDSDSSDSDSSNSSDSDSSDSSDSSSSDSSDSDSDSKDSTSDSSDDNSKSGNGNSDSDSDSDSDSEGSDSNHSTSDD</sequence>
<protein>
    <recommendedName>
        <fullName>Dentin sialophosphoprotein</fullName>
    </recommendedName>
    <component>
        <recommendedName>
            <fullName>Dentin phosphoprotein</fullName>
        </recommendedName>
        <alternativeName>
            <fullName>Dentin phosphophoryn</fullName>
            <shortName>DPP</shortName>
        </alternativeName>
    </component>
    <component>
        <recommendedName>
            <fullName>Dentin sialoprotein</fullName>
            <shortName>DSP</shortName>
        </recommendedName>
    </component>
</protein>
<keyword id="KW-0025">Alternative splicing</keyword>
<keyword id="KW-0091">Biomineralization</keyword>
<keyword id="KW-0106">Calcium</keyword>
<keyword id="KW-0903">Direct protein sequencing</keyword>
<keyword id="KW-0272">Extracellular matrix</keyword>
<keyword id="KW-0325">Glycoprotein</keyword>
<keyword id="KW-0597">Phosphoprotein</keyword>
<keyword id="KW-1185">Reference proteome</keyword>
<keyword id="KW-0964">Secreted</keyword>
<keyword id="KW-0730">Sialic acid</keyword>
<keyword id="KW-0732">Signal</keyword>
<evidence type="ECO:0000250" key="1"/>
<evidence type="ECO:0000255" key="2"/>
<evidence type="ECO:0000256" key="3">
    <source>
        <dbReference type="SAM" id="MobiDB-lite"/>
    </source>
</evidence>
<evidence type="ECO:0000269" key="4">
    <source>
    </source>
</evidence>
<evidence type="ECO:0000269" key="5">
    <source>
    </source>
</evidence>
<evidence type="ECO:0000269" key="6">
    <source>
    </source>
</evidence>
<evidence type="ECO:0000269" key="7">
    <source>
    </source>
</evidence>
<evidence type="ECO:0000303" key="8">
    <source>
    </source>
</evidence>
<evidence type="ECO:0000305" key="9"/>
<dbReference type="EMBL" id="AF247187">
    <property type="protein sequence ID" value="AAK96895.1"/>
    <property type="molecule type" value="mRNA"/>
</dbReference>
<dbReference type="EMBL" id="U02074">
    <property type="protein sequence ID" value="AAA18932.1"/>
    <property type="status" value="ALT_FRAME"/>
    <property type="molecule type" value="mRNA"/>
</dbReference>
<dbReference type="EMBL" id="U63111">
    <property type="protein sequence ID" value="AAC52774.1"/>
    <property type="molecule type" value="mRNA"/>
</dbReference>
<dbReference type="EMBL" id="AF114987">
    <property type="protein sequence ID" value="AAD48588.1"/>
    <property type="status" value="ALT_TERM"/>
    <property type="molecule type" value="Genomic_DNA"/>
</dbReference>
<dbReference type="PIR" id="A53053">
    <property type="entry name" value="A53053"/>
</dbReference>
<dbReference type="STRING" id="10116.ENSRNOP00000002946"/>
<dbReference type="GlyCosmos" id="Q62598">
    <property type="glycosylation" value="6 sites, No reported glycans"/>
</dbReference>
<dbReference type="GlyGen" id="Q62598">
    <property type="glycosylation" value="8 sites"/>
</dbReference>
<dbReference type="iPTMnet" id="Q62598"/>
<dbReference type="PhosphoSitePlus" id="Q62598"/>
<dbReference type="PaxDb" id="10116-ENSRNOP00000002946"/>
<dbReference type="AGR" id="RGD:2525"/>
<dbReference type="RGD" id="2525">
    <property type="gene designation" value="Dspp"/>
</dbReference>
<dbReference type="eggNOG" id="ENOG502S0YS">
    <property type="taxonomic scope" value="Eukaryota"/>
</dbReference>
<dbReference type="InParanoid" id="Q62598"/>
<dbReference type="PhylomeDB" id="Q62598"/>
<dbReference type="Reactome" id="R-RNO-3000178">
    <property type="pathway name" value="ECM proteoglycans"/>
</dbReference>
<dbReference type="PRO" id="PR:Q62598"/>
<dbReference type="Proteomes" id="UP000002494">
    <property type="component" value="Unplaced"/>
</dbReference>
<dbReference type="GO" id="GO:0005737">
    <property type="term" value="C:cytoplasm"/>
    <property type="evidence" value="ECO:0000266"/>
    <property type="project" value="RGD"/>
</dbReference>
<dbReference type="GO" id="GO:0031012">
    <property type="term" value="C:extracellular matrix"/>
    <property type="evidence" value="ECO:0000266"/>
    <property type="project" value="RGD"/>
</dbReference>
<dbReference type="GO" id="GO:0005615">
    <property type="term" value="C:extracellular space"/>
    <property type="evidence" value="ECO:0000266"/>
    <property type="project" value="RGD"/>
</dbReference>
<dbReference type="GO" id="GO:0005634">
    <property type="term" value="C:nucleus"/>
    <property type="evidence" value="ECO:0000314"/>
    <property type="project" value="MGI"/>
</dbReference>
<dbReference type="GO" id="GO:0005886">
    <property type="term" value="C:plasma membrane"/>
    <property type="evidence" value="ECO:0000314"/>
    <property type="project" value="MGI"/>
</dbReference>
<dbReference type="GO" id="GO:0005518">
    <property type="term" value="F:collagen binding"/>
    <property type="evidence" value="ECO:0000314"/>
    <property type="project" value="RGD"/>
</dbReference>
<dbReference type="GO" id="GO:0036305">
    <property type="term" value="P:ameloblast differentiation"/>
    <property type="evidence" value="ECO:0000266"/>
    <property type="project" value="RGD"/>
</dbReference>
<dbReference type="GO" id="GO:0097186">
    <property type="term" value="P:amelogenesis"/>
    <property type="evidence" value="ECO:0000266"/>
    <property type="project" value="RGD"/>
</dbReference>
<dbReference type="GO" id="GO:0031214">
    <property type="term" value="P:biomineral tissue development"/>
    <property type="evidence" value="ECO:0000270"/>
    <property type="project" value="RGD"/>
</dbReference>
<dbReference type="GO" id="GO:0001658">
    <property type="term" value="P:branching involved in ureteric bud morphogenesis"/>
    <property type="evidence" value="ECO:0000266"/>
    <property type="project" value="RGD"/>
</dbReference>
<dbReference type="GO" id="GO:0051216">
    <property type="term" value="P:cartilage development"/>
    <property type="evidence" value="ECO:0000270"/>
    <property type="project" value="RGD"/>
</dbReference>
<dbReference type="GO" id="GO:0030154">
    <property type="term" value="P:cell differentiation"/>
    <property type="evidence" value="ECO:0000270"/>
    <property type="project" value="RGD"/>
</dbReference>
<dbReference type="GO" id="GO:0071460">
    <property type="term" value="P:cellular response to cell-matrix adhesion"/>
    <property type="evidence" value="ECO:0000266"/>
    <property type="project" value="RGD"/>
</dbReference>
<dbReference type="GO" id="GO:0071549">
    <property type="term" value="P:cellular response to dexamethasone stimulus"/>
    <property type="evidence" value="ECO:0000270"/>
    <property type="project" value="RGD"/>
</dbReference>
<dbReference type="GO" id="GO:0032870">
    <property type="term" value="P:cellular response to hormone stimulus"/>
    <property type="evidence" value="ECO:0000270"/>
    <property type="project" value="RGD"/>
</dbReference>
<dbReference type="GO" id="GO:0061448">
    <property type="term" value="P:connective tissue development"/>
    <property type="evidence" value="ECO:0000266"/>
    <property type="project" value="RGD"/>
</dbReference>
<dbReference type="GO" id="GO:0097187">
    <property type="term" value="P:dentinogenesis"/>
    <property type="evidence" value="ECO:0000270"/>
    <property type="project" value="RGD"/>
</dbReference>
<dbReference type="GO" id="GO:0060350">
    <property type="term" value="P:endochondral bone morphogenesis"/>
    <property type="evidence" value="ECO:0000266"/>
    <property type="project" value="RGD"/>
</dbReference>
<dbReference type="GO" id="GO:1901148">
    <property type="term" value="P:gene expression involved in extracellular matrix organization"/>
    <property type="evidence" value="ECO:0000266"/>
    <property type="project" value="RGD"/>
</dbReference>
<dbReference type="GO" id="GO:0048820">
    <property type="term" value="P:hair follicle maturation"/>
    <property type="evidence" value="ECO:0000270"/>
    <property type="project" value="RGD"/>
</dbReference>
<dbReference type="GO" id="GO:0060425">
    <property type="term" value="P:lung morphogenesis"/>
    <property type="evidence" value="ECO:0000266"/>
    <property type="project" value="RGD"/>
</dbReference>
<dbReference type="GO" id="GO:0061978">
    <property type="term" value="P:mandibular condyle articular cartilage development"/>
    <property type="evidence" value="ECO:0000270"/>
    <property type="project" value="RGD"/>
</dbReference>
<dbReference type="GO" id="GO:0060231">
    <property type="term" value="P:mesenchymal to epithelial transition"/>
    <property type="evidence" value="ECO:0000266"/>
    <property type="project" value="RGD"/>
</dbReference>
<dbReference type="GO" id="GO:1903011">
    <property type="term" value="P:negative regulation of bone development"/>
    <property type="evidence" value="ECO:0000266"/>
    <property type="project" value="RGD"/>
</dbReference>
<dbReference type="GO" id="GO:1902731">
    <property type="term" value="P:negative regulation of chondrocyte proliferation"/>
    <property type="evidence" value="ECO:0000266"/>
    <property type="project" value="RGD"/>
</dbReference>
<dbReference type="GO" id="GO:0061914">
    <property type="term" value="P:negative regulation of growth plate cartilage chondrocyte proliferation"/>
    <property type="evidence" value="ECO:0000266"/>
    <property type="project" value="RGD"/>
</dbReference>
<dbReference type="GO" id="GO:2001054">
    <property type="term" value="P:negative regulation of mesenchymal cell apoptotic process"/>
    <property type="evidence" value="ECO:0000266"/>
    <property type="project" value="RGD"/>
</dbReference>
<dbReference type="GO" id="GO:0071895">
    <property type="term" value="P:odontoblast differentiation"/>
    <property type="evidence" value="ECO:0000270"/>
    <property type="project" value="RGD"/>
</dbReference>
<dbReference type="GO" id="GO:0042476">
    <property type="term" value="P:odontogenesis"/>
    <property type="evidence" value="ECO:0000266"/>
    <property type="project" value="RGD"/>
</dbReference>
<dbReference type="GO" id="GO:0042475">
    <property type="term" value="P:odontogenesis of dentin-containing tooth"/>
    <property type="evidence" value="ECO:0000270"/>
    <property type="project" value="RGD"/>
</dbReference>
<dbReference type="GO" id="GO:0090280">
    <property type="term" value="P:positive regulation of calcium ion import"/>
    <property type="evidence" value="ECO:0000314"/>
    <property type="project" value="MGI"/>
</dbReference>
<dbReference type="GO" id="GO:1902732">
    <property type="term" value="P:positive regulation of chondrocyte proliferation"/>
    <property type="evidence" value="ECO:0000266"/>
    <property type="project" value="RGD"/>
</dbReference>
<dbReference type="GO" id="GO:0070175">
    <property type="term" value="P:positive regulation of enamel mineralization"/>
    <property type="evidence" value="ECO:0000266"/>
    <property type="project" value="RGD"/>
</dbReference>
<dbReference type="GO" id="GO:1901329">
    <property type="term" value="P:regulation of odontoblast differentiation"/>
    <property type="evidence" value="ECO:0000314"/>
    <property type="project" value="UniProtKB"/>
</dbReference>
<dbReference type="GO" id="GO:0009743">
    <property type="term" value="P:response to carbohydrate"/>
    <property type="evidence" value="ECO:0000270"/>
    <property type="project" value="RGD"/>
</dbReference>
<dbReference type="GO" id="GO:0001666">
    <property type="term" value="P:response to hypoxia"/>
    <property type="evidence" value="ECO:0000270"/>
    <property type="project" value="RGD"/>
</dbReference>
<dbReference type="GO" id="GO:0009612">
    <property type="term" value="P:response to mechanical stimulus"/>
    <property type="evidence" value="ECO:0000270"/>
    <property type="project" value="RGD"/>
</dbReference>
<dbReference type="GO" id="GO:0071559">
    <property type="term" value="P:response to transforming growth factor beta"/>
    <property type="evidence" value="ECO:0000270"/>
    <property type="project" value="RGD"/>
</dbReference>
<dbReference type="GO" id="GO:0072050">
    <property type="term" value="P:S-shaped body morphogenesis"/>
    <property type="evidence" value="ECO:0000266"/>
    <property type="project" value="RGD"/>
</dbReference>
<dbReference type="PANTHER" id="PTHR47819">
    <property type="entry name" value="DENTIN SIALOPHOSPHOPROTEIN"/>
    <property type="match status" value="1"/>
</dbReference>
<dbReference type="PANTHER" id="PTHR47819:SF1">
    <property type="entry name" value="DENTIN SIALOPHOSPHOPROTEIN"/>
    <property type="match status" value="1"/>
</dbReference>
<accession>Q62598</accession>
<accession>P70578</accession>
<accession>Q9R057</accession>
<organism>
    <name type="scientific">Rattus norvegicus</name>
    <name type="common">Rat</name>
    <dbReference type="NCBI Taxonomy" id="10116"/>
    <lineage>
        <taxon>Eukaryota</taxon>
        <taxon>Metazoa</taxon>
        <taxon>Chordata</taxon>
        <taxon>Craniata</taxon>
        <taxon>Vertebrata</taxon>
        <taxon>Euteleostomi</taxon>
        <taxon>Mammalia</taxon>
        <taxon>Eutheria</taxon>
        <taxon>Euarchontoglires</taxon>
        <taxon>Glires</taxon>
        <taxon>Rodentia</taxon>
        <taxon>Myomorpha</taxon>
        <taxon>Muroidea</taxon>
        <taxon>Muridae</taxon>
        <taxon>Murinae</taxon>
        <taxon>Rattus</taxon>
    </lineage>
</organism>
<proteinExistence type="evidence at protein level"/>
<reference key="1">
    <citation type="journal article" date="2000" name="Biochim. Biophys. Acta">
        <title>The presence of multiple rat DSP-PP transcripts.</title>
        <authorList>
            <person name="Ritchie H.H."/>
            <person name="Wang L.-H."/>
        </authorList>
    </citation>
    <scope>NUCLEOTIDE SEQUENCE [MRNA] (ISOFORM DPP-2)</scope>
    <source>
        <strain>Sprague-Dawley</strain>
    </source>
</reference>
<reference key="2">
    <citation type="journal article" date="1994" name="J. Biol. Chem.">
        <title>Cloning and sequence determination of rat dentin sialoprotein, a novel dentin protein.</title>
        <authorList>
            <person name="Ritchie H.H."/>
            <person name="Hou H."/>
            <person name="Veis A."/>
            <person name="Butler W.T."/>
        </authorList>
    </citation>
    <scope>NUCLEOTIDE SEQUENCE [MRNA] OF 1-387</scope>
    <scope>PROTEIN SEQUENCE OF 18-26</scope>
    <source>
        <strain>Sprague-Dawley</strain>
        <tissue>Odontoblast</tissue>
    </source>
</reference>
<reference key="3">
    <citation type="journal article" date="1996" name="J. Biol. Chem.">
        <title>Sequence determination of an extremely acidic rat dentin phosphoprotein.</title>
        <authorList>
            <person name="Ritchie H.H."/>
            <person name="Wang L.-H."/>
        </authorList>
    </citation>
    <scope>NUCLEOTIDE SEQUENCE [MRNA] OF 421-687 (ISOFORM DPP-1)</scope>
    <source>
        <strain>Sprague-Dawley</strain>
    </source>
</reference>
<reference key="4">
    <citation type="journal article" date="1999" name="Biochem. Biophys. Res. Commun.">
        <title>Tooth-specific expression conferred by the regulatory sequences of rat dentin sialoprotein gene in transgenic mice.</title>
        <authorList>
            <person name="Yamazaki H."/>
            <person name="Kunisada T."/>
            <person name="Miyamoto A."/>
            <person name="Tagaya H."/>
            <person name="Hayashi S."/>
        </authorList>
    </citation>
    <scope>NUCLEOTIDE SEQUENCE [GENOMIC DNA] OF 1-19</scope>
    <source>
        <strain>Sprague-Dawley</strain>
    </source>
</reference>
<reference key="5">
    <citation type="journal article" date="2001" name="J. Biol. Chem.">
        <title>Identification and characterization of the carboxyl-terminal region of rat dentin sialoprotein.</title>
        <authorList>
            <person name="Qin C."/>
            <person name="Cook R.G."/>
            <person name="Orkiszewski R.S."/>
            <person name="Butler W.T."/>
        </authorList>
    </citation>
    <scope>PROTEIN SEQUENCE OF 29-33; 70-79; 93-109; 136-148; 162-188; 266-308; 398-423 AND 426-438</scope>
    <scope>PHOSPHORYLATION AT SER-292 AND SER-298</scope>
</reference>
<reference key="6">
    <citation type="journal article" date="1997" name="Eur. J. Oral Sci.">
        <title>Dentin sialoprotein (DSP) transcripts: developmentally-sustained expression in odontoblasts and transient expression in pre-ameloblasts.</title>
        <authorList>
            <person name="Ritchie H.H."/>
            <person name="Berry J.E."/>
            <person name="Somerman M.J."/>
            <person name="Hanks C.T."/>
            <person name="Bronckers A.L."/>
            <person name="Hotton D."/>
            <person name="Papagerakis P."/>
            <person name="Berdal A."/>
            <person name="Butler W.T."/>
        </authorList>
    </citation>
    <scope>TISSUE SPECIFICITY</scope>
</reference>
<reference key="7">
    <citation type="journal article" date="2004" name="J. Biol. Chem.">
        <title>The CCAAT enhancer-binding protein (C/EBP)beta and Nrf1 interact to regulate dentin sialophosphoprotein (DSPP) gene expression during odontoblast differentiation.</title>
        <authorList>
            <person name="Narayanan K."/>
            <person name="Ramachandran A."/>
            <person name="Peterson M.C."/>
            <person name="Hao J."/>
            <person name="Kolstoe A.B."/>
            <person name="Friedman A.D."/>
            <person name="George A."/>
        </authorList>
    </citation>
    <scope>INDUCTION</scope>
</reference>
<gene>
    <name type="primary">Dspp</name>
    <name type="synonym">Rdsp2</name>
</gene>
<comment type="function">
    <text>DSP may be an important factor in dentinogenesis. DPP may bind high amount of calcium and facilitate initial mineralization of dentin matrix collagen as well as regulate the size and shape of the crystals.</text>
</comment>
<comment type="subunit">
    <text evidence="1">Interacts with FBLN7.</text>
</comment>
<comment type="subcellular location">
    <subcellularLocation>
        <location>Secreted</location>
        <location>Extracellular space</location>
        <location>Extracellular matrix</location>
    </subcellularLocation>
</comment>
<comment type="alternative products">
    <event type="alternative splicing"/>
    <isoform>
        <id>Q62598-1</id>
        <name>DPP-1</name>
        <name>PP240</name>
        <sequence type="displayed"/>
    </isoform>
    <isoform>
        <id>Q62598-2</id>
        <name>DPP-2</name>
        <name>PP171</name>
        <sequence type="described" ref="VSP_003855"/>
    </isoform>
</comment>
<comment type="tissue specificity">
    <text evidence="7">Specifically expressed in teeth, mainly in odontoblasts and transiently in pre-ameloblasts.</text>
</comment>
<comment type="induction">
    <text evidence="5">Down-regulated by the CEBPB-NFE2L1 heterodimer during odontoblast differentiation.</text>
</comment>
<comment type="PTM">
    <text>DSP is glycosylated.</text>
</comment>
<comment type="sequence caution" evidence="9">
    <conflict type="frameshift">
        <sequence resource="EMBL-CDS" id="AAA18932"/>
    </conflict>
</comment>
<name>DSPP_RAT</name>
<feature type="signal peptide" evidence="6">
    <location>
        <begin position="1"/>
        <end position="17"/>
    </location>
</feature>
<feature type="chain" id="PRO_0000021126" description="Dentin sialophosphoprotein">
    <location>
        <begin position="18"/>
        <end position="687"/>
    </location>
</feature>
<feature type="chain" id="PRO_0000021127" description="Dentin sialoprotein">
    <location>
        <begin position="18"/>
        <end position="447"/>
    </location>
</feature>
<feature type="chain" id="PRO_0000021128" description="Dentin phosphoprotein">
    <location>
        <begin position="448"/>
        <end position="687"/>
    </location>
</feature>
<feature type="region of interest" description="Disordered" evidence="3">
    <location>
        <begin position="54"/>
        <end position="113"/>
    </location>
</feature>
<feature type="region of interest" description="Disordered" evidence="3">
    <location>
        <begin position="146"/>
        <end position="687"/>
    </location>
</feature>
<feature type="compositionally biased region" description="Polar residues" evidence="3">
    <location>
        <begin position="93"/>
        <end position="107"/>
    </location>
</feature>
<feature type="compositionally biased region" description="Basic and acidic residues" evidence="3">
    <location>
        <begin position="146"/>
        <end position="160"/>
    </location>
</feature>
<feature type="compositionally biased region" description="Polar residues" evidence="3">
    <location>
        <begin position="161"/>
        <end position="194"/>
    </location>
</feature>
<feature type="compositionally biased region" description="Basic and acidic residues" evidence="3">
    <location>
        <begin position="262"/>
        <end position="275"/>
    </location>
</feature>
<feature type="compositionally biased region" description="Polar residues" evidence="3">
    <location>
        <begin position="276"/>
        <end position="292"/>
    </location>
</feature>
<feature type="compositionally biased region" description="Polar residues" evidence="3">
    <location>
        <begin position="352"/>
        <end position="375"/>
    </location>
</feature>
<feature type="compositionally biased region" description="Basic and acidic residues" evidence="3">
    <location>
        <begin position="386"/>
        <end position="417"/>
    </location>
</feature>
<feature type="compositionally biased region" description="Polar residues" evidence="3">
    <location>
        <begin position="418"/>
        <end position="432"/>
    </location>
</feature>
<feature type="compositionally biased region" description="Low complexity" evidence="3">
    <location>
        <begin position="447"/>
        <end position="460"/>
    </location>
</feature>
<feature type="compositionally biased region" description="Acidic residues" evidence="3">
    <location>
        <begin position="500"/>
        <end position="521"/>
    </location>
</feature>
<feature type="compositionally biased region" description="Basic and acidic residues" evidence="3">
    <location>
        <begin position="522"/>
        <end position="545"/>
    </location>
</feature>
<feature type="compositionally biased region" description="Low complexity" evidence="3">
    <location>
        <begin position="555"/>
        <end position="598"/>
    </location>
</feature>
<feature type="compositionally biased region" description="Acidic residues" evidence="3">
    <location>
        <begin position="599"/>
        <end position="617"/>
    </location>
</feature>
<feature type="compositionally biased region" description="Low complexity" evidence="3">
    <location>
        <begin position="618"/>
        <end position="639"/>
    </location>
</feature>
<feature type="compositionally biased region" description="Acidic residues" evidence="3">
    <location>
        <begin position="667"/>
        <end position="677"/>
    </location>
</feature>
<feature type="compositionally biased region" description="Low complexity" evidence="3">
    <location>
        <begin position="678"/>
        <end position="687"/>
    </location>
</feature>
<feature type="modified residue" description="Phosphothreonine; by CK2" evidence="2">
    <location>
        <position position="57"/>
    </location>
</feature>
<feature type="modified residue" description="Phosphoserine; by CK2" evidence="2">
    <location>
        <position position="226"/>
    </location>
</feature>
<feature type="modified residue" description="Phosphoserine; by CK1" evidence="2">
    <location>
        <position position="253"/>
    </location>
</feature>
<feature type="modified residue" description="Phosphoserine; by CK1" evidence="2">
    <location>
        <position position="278"/>
    </location>
</feature>
<feature type="modified residue" description="Phosphoserine; by CK2" evidence="4">
    <location>
        <position position="292"/>
    </location>
</feature>
<feature type="modified residue" description="Phosphoserine; by CK1" evidence="4">
    <location>
        <position position="298"/>
    </location>
</feature>
<feature type="modified residue" description="Phosphoserine; by CK2" evidence="2">
    <location>
        <position position="315"/>
    </location>
</feature>
<feature type="modified residue" description="Phosphothreonine; by CK2" evidence="2">
    <location>
        <position position="319"/>
    </location>
</feature>
<feature type="modified residue" description="Phosphothreonine; by CK2" evidence="2">
    <location>
        <position position="329"/>
    </location>
</feature>
<feature type="modified residue" description="Phosphoserine; by CK2" evidence="2">
    <location>
        <position position="337"/>
    </location>
</feature>
<feature type="modified residue" description="Phosphoserine; by CK2" evidence="2">
    <location>
        <position position="345"/>
    </location>
</feature>
<feature type="modified residue" description="Phosphoserine; by CK1" evidence="2">
    <location>
        <position position="366"/>
    </location>
</feature>
<feature type="glycosylation site" description="N-linked (GlcNAc...) asparagine" evidence="2">
    <location>
        <position position="55"/>
    </location>
</feature>
<feature type="glycosylation site" description="N-linked (GlcNAc...) asparagine" evidence="2">
    <location>
        <position position="82"/>
    </location>
</feature>
<feature type="glycosylation site" description="N-linked (GlcNAc...) asparagine" evidence="2">
    <location>
        <position position="128"/>
    </location>
</feature>
<feature type="glycosylation site" description="N-linked (GlcNAc...) asparagine" evidence="2">
    <location>
        <position position="189"/>
    </location>
</feature>
<feature type="glycosylation site" description="N-linked (GlcNAc...) asparagine" evidence="2">
    <location>
        <position position="312"/>
    </location>
</feature>
<feature type="glycosylation site" description="N-linked (GlcNAc...) asparagine" evidence="2">
    <location>
        <position position="369"/>
    </location>
</feature>
<feature type="splice variant" id="VSP_003855" description="In isoform DPP-2." evidence="8">
    <location>
        <begin position="567"/>
        <end position="635"/>
    </location>
</feature>
<feature type="sequence conflict" description="In Ref. 5; AA sequence." evidence="9" ref="5">
    <original>N</original>
    <variation>D</variation>
    <location>
        <position position="74"/>
    </location>
</feature>
<feature type="sequence conflict" description="In Ref. 3; AAC52774." evidence="9" ref="3">
    <original>S</original>
    <variation>T</variation>
    <location>
        <position position="564"/>
    </location>
</feature>